<accession>A7MPA0</accession>
<organism>
    <name type="scientific">Cronobacter sakazakii (strain ATCC BAA-894)</name>
    <name type="common">Enterobacter sakazakii</name>
    <dbReference type="NCBI Taxonomy" id="290339"/>
    <lineage>
        <taxon>Bacteria</taxon>
        <taxon>Pseudomonadati</taxon>
        <taxon>Pseudomonadota</taxon>
        <taxon>Gammaproteobacteria</taxon>
        <taxon>Enterobacterales</taxon>
        <taxon>Enterobacteriaceae</taxon>
        <taxon>Cronobacter</taxon>
    </lineage>
</organism>
<feature type="chain" id="PRO_1000048437" description="Isopentenyl-diphosphate delta-isomerase">
    <location>
        <begin position="1"/>
        <end position="347"/>
    </location>
</feature>
<feature type="binding site" evidence="1">
    <location>
        <begin position="9"/>
        <end position="10"/>
    </location>
    <ligand>
        <name>substrate</name>
    </ligand>
</feature>
<feature type="binding site" evidence="1">
    <location>
        <position position="67"/>
    </location>
    <ligand>
        <name>FMN</name>
        <dbReference type="ChEBI" id="CHEBI:58210"/>
    </ligand>
</feature>
<feature type="binding site" evidence="1">
    <location>
        <begin position="68"/>
        <end position="70"/>
    </location>
    <ligand>
        <name>FMN</name>
        <dbReference type="ChEBI" id="CHEBI:58210"/>
    </ligand>
</feature>
<feature type="binding site" evidence="1">
    <location>
        <begin position="98"/>
        <end position="100"/>
    </location>
    <ligand>
        <name>substrate</name>
    </ligand>
</feature>
<feature type="binding site" evidence="1">
    <location>
        <position position="98"/>
    </location>
    <ligand>
        <name>FMN</name>
        <dbReference type="ChEBI" id="CHEBI:58210"/>
    </ligand>
</feature>
<feature type="binding site" evidence="1">
    <location>
        <position position="127"/>
    </location>
    <ligand>
        <name>FMN</name>
        <dbReference type="ChEBI" id="CHEBI:58210"/>
    </ligand>
</feature>
<feature type="binding site" evidence="1">
    <location>
        <position position="162"/>
    </location>
    <ligand>
        <name>substrate</name>
    </ligand>
</feature>
<feature type="binding site" evidence="1">
    <location>
        <position position="163"/>
    </location>
    <ligand>
        <name>Mg(2+)</name>
        <dbReference type="ChEBI" id="CHEBI:18420"/>
    </ligand>
</feature>
<feature type="binding site" evidence="1">
    <location>
        <position position="194"/>
    </location>
    <ligand>
        <name>FMN</name>
        <dbReference type="ChEBI" id="CHEBI:58210"/>
    </ligand>
</feature>
<feature type="binding site" evidence="1">
    <location>
        <position position="224"/>
    </location>
    <ligand>
        <name>FMN</name>
        <dbReference type="ChEBI" id="CHEBI:58210"/>
    </ligand>
</feature>
<feature type="binding site" evidence="1">
    <location>
        <begin position="274"/>
        <end position="276"/>
    </location>
    <ligand>
        <name>FMN</name>
        <dbReference type="ChEBI" id="CHEBI:58210"/>
    </ligand>
</feature>
<feature type="binding site" evidence="1">
    <location>
        <begin position="295"/>
        <end position="296"/>
    </location>
    <ligand>
        <name>FMN</name>
        <dbReference type="ChEBI" id="CHEBI:58210"/>
    </ligand>
</feature>
<evidence type="ECO:0000255" key="1">
    <source>
        <dbReference type="HAMAP-Rule" id="MF_00354"/>
    </source>
</evidence>
<gene>
    <name evidence="1" type="primary">fni</name>
    <name type="ordered locus">ESA_00346</name>
</gene>
<protein>
    <recommendedName>
        <fullName evidence="1">Isopentenyl-diphosphate delta-isomerase</fullName>
        <shortName evidence="1">IPP isomerase</shortName>
        <ecNumber evidence="1">5.3.3.2</ecNumber>
    </recommendedName>
    <alternativeName>
        <fullName evidence="1">Isopentenyl diphosphate:dimethylallyl diphosphate isomerase</fullName>
    </alternativeName>
    <alternativeName>
        <fullName evidence="1">Isopentenyl pyrophosphate isomerase</fullName>
    </alternativeName>
    <alternativeName>
        <fullName evidence="1">Type 2 isopentenyl diphosphate isomerase</fullName>
        <shortName evidence="1">IDI-2</shortName>
    </alternativeName>
</protein>
<name>IDI2_CROS8</name>
<comment type="function">
    <text evidence="1">Involved in the biosynthesis of isoprenoids. Catalyzes the 1,3-allylic rearrangement of the homoallylic substrate isopentenyl (IPP) to its allylic isomer, dimethylallyl diphosphate (DMAPP).</text>
</comment>
<comment type="catalytic activity">
    <reaction evidence="1">
        <text>isopentenyl diphosphate = dimethylallyl diphosphate</text>
        <dbReference type="Rhea" id="RHEA:23284"/>
        <dbReference type="ChEBI" id="CHEBI:57623"/>
        <dbReference type="ChEBI" id="CHEBI:128769"/>
        <dbReference type="EC" id="5.3.3.2"/>
    </reaction>
</comment>
<comment type="cofactor">
    <cofactor evidence="1">
        <name>FMN</name>
        <dbReference type="ChEBI" id="CHEBI:58210"/>
    </cofactor>
</comment>
<comment type="cofactor">
    <cofactor evidence="1">
        <name>NADPH</name>
        <dbReference type="ChEBI" id="CHEBI:57783"/>
    </cofactor>
</comment>
<comment type="cofactor">
    <cofactor evidence="1">
        <name>Mg(2+)</name>
        <dbReference type="ChEBI" id="CHEBI:18420"/>
    </cofactor>
</comment>
<comment type="subunit">
    <text evidence="1">Homooctamer. Dimer of tetramers.</text>
</comment>
<comment type="subcellular location">
    <subcellularLocation>
        <location evidence="1">Cytoplasm</location>
    </subcellularLocation>
</comment>
<comment type="similarity">
    <text evidence="1">Belongs to the IPP isomerase type 2 family.</text>
</comment>
<sequence>MKDKELSQRKNDHLDIVLHPERAKQTIRTGFEQWRFEHCALPELALDDIDLSTRLFGRVMKAPLLISSMTGGARRASDINRHLAEAAQTLGLAMGVGSQRVALESEDNWGLTGELRRYAPDIPLLANLGAAQIGSLQGLDYARRAVEMVEADALIIHLNPLQEALQTGGDRDWRGVLAAIKRVVNALSVPVVVKEVGAGLSVPVARQLAEAGVTMLDVAGAGGTSWAAVEGERAASDHARSVAMAFADWGIPTAQALRQIHQAFPSMPLIASGGIRDGIDTAKALAMGASLVGQAAAVLGSATTSTSAVLDHFAVVIEQLRVACFCTGSASLSALREARLARVGDEE</sequence>
<reference key="1">
    <citation type="journal article" date="2010" name="PLoS ONE">
        <title>Genome sequence of Cronobacter sakazakii BAA-894 and comparative genomic hybridization analysis with other Cronobacter species.</title>
        <authorList>
            <person name="Kucerova E."/>
            <person name="Clifton S.W."/>
            <person name="Xia X.Q."/>
            <person name="Long F."/>
            <person name="Porwollik S."/>
            <person name="Fulton L."/>
            <person name="Fronick C."/>
            <person name="Minx P."/>
            <person name="Kyung K."/>
            <person name="Warren W."/>
            <person name="Fulton R."/>
            <person name="Feng D."/>
            <person name="Wollam A."/>
            <person name="Shah N."/>
            <person name="Bhonagiri V."/>
            <person name="Nash W.E."/>
            <person name="Hallsworth-Pepin K."/>
            <person name="Wilson R.K."/>
            <person name="McClelland M."/>
            <person name="Forsythe S.J."/>
        </authorList>
    </citation>
    <scope>NUCLEOTIDE SEQUENCE [LARGE SCALE GENOMIC DNA]</scope>
    <source>
        <strain>ATCC BAA-894</strain>
    </source>
</reference>
<proteinExistence type="inferred from homology"/>
<dbReference type="EC" id="5.3.3.2" evidence="1"/>
<dbReference type="EMBL" id="CP000783">
    <property type="protein sequence ID" value="ABU75645.1"/>
    <property type="molecule type" value="Genomic_DNA"/>
</dbReference>
<dbReference type="RefSeq" id="WP_012123800.1">
    <property type="nucleotide sequence ID" value="NC_009778.1"/>
</dbReference>
<dbReference type="SMR" id="A7MPA0"/>
<dbReference type="KEGG" id="esa:ESA_00346"/>
<dbReference type="PATRIC" id="fig|290339.8.peg.308"/>
<dbReference type="HOGENOM" id="CLU_065515_1_0_6"/>
<dbReference type="Proteomes" id="UP000000260">
    <property type="component" value="Chromosome"/>
</dbReference>
<dbReference type="GO" id="GO:0005737">
    <property type="term" value="C:cytoplasm"/>
    <property type="evidence" value="ECO:0007669"/>
    <property type="project" value="UniProtKB-SubCell"/>
</dbReference>
<dbReference type="GO" id="GO:0010181">
    <property type="term" value="F:FMN binding"/>
    <property type="evidence" value="ECO:0007669"/>
    <property type="project" value="UniProtKB-UniRule"/>
</dbReference>
<dbReference type="GO" id="GO:0004452">
    <property type="term" value="F:isopentenyl-diphosphate delta-isomerase activity"/>
    <property type="evidence" value="ECO:0007669"/>
    <property type="project" value="UniProtKB-UniRule"/>
</dbReference>
<dbReference type="GO" id="GO:0000287">
    <property type="term" value="F:magnesium ion binding"/>
    <property type="evidence" value="ECO:0007669"/>
    <property type="project" value="UniProtKB-UniRule"/>
</dbReference>
<dbReference type="GO" id="GO:0070402">
    <property type="term" value="F:NADPH binding"/>
    <property type="evidence" value="ECO:0007669"/>
    <property type="project" value="UniProtKB-UniRule"/>
</dbReference>
<dbReference type="GO" id="GO:0016491">
    <property type="term" value="F:oxidoreductase activity"/>
    <property type="evidence" value="ECO:0007669"/>
    <property type="project" value="InterPro"/>
</dbReference>
<dbReference type="GO" id="GO:0008299">
    <property type="term" value="P:isoprenoid biosynthetic process"/>
    <property type="evidence" value="ECO:0007669"/>
    <property type="project" value="UniProtKB-UniRule"/>
</dbReference>
<dbReference type="CDD" id="cd02811">
    <property type="entry name" value="IDI-2_FMN"/>
    <property type="match status" value="1"/>
</dbReference>
<dbReference type="Gene3D" id="3.20.20.70">
    <property type="entry name" value="Aldolase class I"/>
    <property type="match status" value="1"/>
</dbReference>
<dbReference type="HAMAP" id="MF_00354">
    <property type="entry name" value="Idi_2"/>
    <property type="match status" value="1"/>
</dbReference>
<dbReference type="InterPro" id="IPR013785">
    <property type="entry name" value="Aldolase_TIM"/>
</dbReference>
<dbReference type="InterPro" id="IPR000262">
    <property type="entry name" value="FMN-dep_DH"/>
</dbReference>
<dbReference type="InterPro" id="IPR011179">
    <property type="entry name" value="IPdP_isomerase"/>
</dbReference>
<dbReference type="NCBIfam" id="TIGR02151">
    <property type="entry name" value="IPP_isom_2"/>
    <property type="match status" value="1"/>
</dbReference>
<dbReference type="PANTHER" id="PTHR43665">
    <property type="entry name" value="ISOPENTENYL-DIPHOSPHATE DELTA-ISOMERASE"/>
    <property type="match status" value="1"/>
</dbReference>
<dbReference type="PANTHER" id="PTHR43665:SF1">
    <property type="entry name" value="ISOPENTENYL-DIPHOSPHATE DELTA-ISOMERASE"/>
    <property type="match status" value="1"/>
</dbReference>
<dbReference type="Pfam" id="PF01070">
    <property type="entry name" value="FMN_dh"/>
    <property type="match status" value="2"/>
</dbReference>
<dbReference type="PIRSF" id="PIRSF003314">
    <property type="entry name" value="IPP_isomerase"/>
    <property type="match status" value="1"/>
</dbReference>
<dbReference type="SUPFAM" id="SSF51395">
    <property type="entry name" value="FMN-linked oxidoreductases"/>
    <property type="match status" value="1"/>
</dbReference>
<keyword id="KW-0963">Cytoplasm</keyword>
<keyword id="KW-0285">Flavoprotein</keyword>
<keyword id="KW-0288">FMN</keyword>
<keyword id="KW-0413">Isomerase</keyword>
<keyword id="KW-0414">Isoprene biosynthesis</keyword>
<keyword id="KW-0460">Magnesium</keyword>
<keyword id="KW-0479">Metal-binding</keyword>
<keyword id="KW-0521">NADP</keyword>
<keyword id="KW-1185">Reference proteome</keyword>